<gene>
    <name evidence="1" type="primary">pyrC</name>
</gene>
<protein>
    <recommendedName>
        <fullName evidence="1">Dihydroorotase</fullName>
        <shortName evidence="1">DHOase</shortName>
        <ecNumber evidence="1">3.5.2.3</ecNumber>
    </recommendedName>
</protein>
<proteinExistence type="inferred from homology"/>
<comment type="function">
    <text evidence="1">Catalyzes the reversible cyclization of carbamoyl aspartate to dihydroorotate.</text>
</comment>
<comment type="catalytic activity">
    <reaction evidence="1">
        <text>(S)-dihydroorotate + H2O = N-carbamoyl-L-aspartate + H(+)</text>
        <dbReference type="Rhea" id="RHEA:24296"/>
        <dbReference type="ChEBI" id="CHEBI:15377"/>
        <dbReference type="ChEBI" id="CHEBI:15378"/>
        <dbReference type="ChEBI" id="CHEBI:30864"/>
        <dbReference type="ChEBI" id="CHEBI:32814"/>
        <dbReference type="EC" id="3.5.2.3"/>
    </reaction>
</comment>
<comment type="cofactor">
    <cofactor evidence="1">
        <name>Zn(2+)</name>
        <dbReference type="ChEBI" id="CHEBI:29105"/>
    </cofactor>
    <text evidence="1">Binds 2 Zn(2+) ions per subunit.</text>
</comment>
<comment type="pathway">
    <text evidence="1">Pyrimidine metabolism; UMP biosynthesis via de novo pathway; (S)-dihydroorotate from bicarbonate: step 3/3.</text>
</comment>
<comment type="subunit">
    <text evidence="1">Homodimer.</text>
</comment>
<comment type="similarity">
    <text evidence="1">Belongs to the metallo-dependent hydrolases superfamily. DHOase family. Class II DHOase subfamily.</text>
</comment>
<comment type="sequence caution" evidence="2">
    <conflict type="erroneous initiation">
        <sequence resource="EMBL-CDS" id="AAD50307"/>
    </conflict>
</comment>
<organism>
    <name type="scientific">Serratia marcescens</name>
    <dbReference type="NCBI Taxonomy" id="615"/>
    <lineage>
        <taxon>Bacteria</taxon>
        <taxon>Pseudomonadati</taxon>
        <taxon>Pseudomonadota</taxon>
        <taxon>Gammaproteobacteria</taxon>
        <taxon>Enterobacterales</taxon>
        <taxon>Yersiniaceae</taxon>
        <taxon>Serratia</taxon>
    </lineage>
</organism>
<feature type="chain" id="PRO_0000147219" description="Dihydroorotase">
    <location>
        <begin position="1" status="less than"/>
        <end position="204"/>
    </location>
</feature>
<feature type="active site" evidence="1">
    <location>
        <position position="107"/>
    </location>
</feature>
<feature type="binding site" evidence="1">
    <location>
        <position position="34"/>
    </location>
    <ligand>
        <name>Zn(2+)</name>
        <dbReference type="ChEBI" id="CHEBI:29105"/>
        <label>2</label>
    </ligand>
</feature>
<feature type="binding site" evidence="1">
    <location>
        <position position="79"/>
    </location>
    <ligand>
        <name>substrate</name>
    </ligand>
</feature>
<feature type="binding site" evidence="1">
    <location>
        <position position="107"/>
    </location>
    <ligand>
        <name>Zn(2+)</name>
        <dbReference type="ChEBI" id="CHEBI:29105"/>
        <label>1</label>
    </ligand>
</feature>
<feature type="binding site" evidence="1">
    <location>
        <position position="111"/>
    </location>
    <ligand>
        <name>substrate</name>
    </ligand>
</feature>
<feature type="binding site" evidence="1">
    <location>
        <position position="123"/>
    </location>
    <ligand>
        <name>substrate</name>
    </ligand>
</feature>
<feature type="non-terminal residue">
    <location>
        <position position="1"/>
    </location>
</feature>
<sequence length="204" mass="22899">DPAVDIFDREARFIEQVMEPIRQHFPELKIVFEHITTKEAAQYVQAGNRFLGATITPQHLMFNRNHMLVGGIRPHLFCLPILKRNVHQEALRQAVASGSDRFFLGTDSAPHLKHRKESSCGCAGCFNAPNAIPAYAAVFEQLGALEHFEAFCSLNGPRFYGLPLNEDFIELQRVPTTQPEEIALGNESVIPFLAGETLNWSLKD</sequence>
<keyword id="KW-0378">Hydrolase</keyword>
<keyword id="KW-0479">Metal-binding</keyword>
<keyword id="KW-0665">Pyrimidine biosynthesis</keyword>
<keyword id="KW-0862">Zinc</keyword>
<dbReference type="EC" id="3.5.2.3" evidence="1"/>
<dbReference type="EMBL" id="AF175466">
    <property type="protein sequence ID" value="AAD50307.1"/>
    <property type="status" value="ALT_INIT"/>
    <property type="molecule type" value="Genomic_DNA"/>
</dbReference>
<dbReference type="SMR" id="Q9S3S1"/>
<dbReference type="STRING" id="273526.SMDB11_1154"/>
<dbReference type="UniPathway" id="UPA00070">
    <property type="reaction ID" value="UER00117"/>
</dbReference>
<dbReference type="GO" id="GO:0005829">
    <property type="term" value="C:cytosol"/>
    <property type="evidence" value="ECO:0007669"/>
    <property type="project" value="TreeGrafter"/>
</dbReference>
<dbReference type="GO" id="GO:0004151">
    <property type="term" value="F:dihydroorotase activity"/>
    <property type="evidence" value="ECO:0007669"/>
    <property type="project" value="UniProtKB-EC"/>
</dbReference>
<dbReference type="GO" id="GO:0046872">
    <property type="term" value="F:metal ion binding"/>
    <property type="evidence" value="ECO:0007669"/>
    <property type="project" value="UniProtKB-KW"/>
</dbReference>
<dbReference type="GO" id="GO:0006207">
    <property type="term" value="P:'de novo' pyrimidine nucleobase biosynthetic process"/>
    <property type="evidence" value="ECO:0007669"/>
    <property type="project" value="TreeGrafter"/>
</dbReference>
<dbReference type="GO" id="GO:0044205">
    <property type="term" value="P:'de novo' UMP biosynthetic process"/>
    <property type="evidence" value="ECO:0007669"/>
    <property type="project" value="UniProtKB-UniPathway"/>
</dbReference>
<dbReference type="Gene3D" id="3.20.20.140">
    <property type="entry name" value="Metal-dependent hydrolases"/>
    <property type="match status" value="1"/>
</dbReference>
<dbReference type="InterPro" id="IPR006680">
    <property type="entry name" value="Amidohydro-rel"/>
</dbReference>
<dbReference type="InterPro" id="IPR004721">
    <property type="entry name" value="DHOdimr"/>
</dbReference>
<dbReference type="InterPro" id="IPR002195">
    <property type="entry name" value="Dihydroorotase_CS"/>
</dbReference>
<dbReference type="InterPro" id="IPR032466">
    <property type="entry name" value="Metal_Hydrolase"/>
</dbReference>
<dbReference type="PANTHER" id="PTHR43137">
    <property type="entry name" value="DIHYDROOROTASE"/>
    <property type="match status" value="1"/>
</dbReference>
<dbReference type="PANTHER" id="PTHR43137:SF1">
    <property type="entry name" value="DIHYDROOROTASE"/>
    <property type="match status" value="1"/>
</dbReference>
<dbReference type="Pfam" id="PF01979">
    <property type="entry name" value="Amidohydro_1"/>
    <property type="match status" value="1"/>
</dbReference>
<dbReference type="SUPFAM" id="SSF51556">
    <property type="entry name" value="Metallo-dependent hydrolases"/>
    <property type="match status" value="1"/>
</dbReference>
<dbReference type="PROSITE" id="PS00483">
    <property type="entry name" value="DIHYDROOROTASE_2"/>
    <property type="match status" value="1"/>
</dbReference>
<reference key="1">
    <citation type="submission" date="1999-08" db="EMBL/GenBank/DDBJ databases">
        <title>DinI inhibits transcription of Serratia marcescens nuclease.</title>
        <authorList>
            <person name="Berkmen M."/>
            <person name="Benedik M.J."/>
        </authorList>
    </citation>
    <scope>NUCLEOTIDE SEQUENCE [GENOMIC DNA]</scope>
    <source>
        <strain>SM6</strain>
    </source>
</reference>
<evidence type="ECO:0000255" key="1">
    <source>
        <dbReference type="HAMAP-Rule" id="MF_00219"/>
    </source>
</evidence>
<evidence type="ECO:0000305" key="2"/>
<accession>Q9S3S1</accession>
<name>PYRC_SERMA</name>